<name>COX2_DROSU</name>
<geneLocation type="mitochondrion"/>
<sequence>MSTWANLGLQDSASPLMEQLIFFHDHALLILVMITVLVGYLMVMLFFNSYVNRFLLHGQLIEMIWTILPAIILLFIAMPSLRLLYLLDEINEPSITLKSIGHQWYWSYEYSDFNDIEFDSYMIPTNELSNDGFRLLDVDNRIVLPMNSQIRILVTAADVIHSWTIPALGVKVDGTPGRLNQTNFFINRPGLFYGQCSEICGANHSFMPIVIESVPVNYFIKWISDKVNS</sequence>
<organism>
    <name type="scientific">Drosophila subobscura</name>
    <name type="common">Fruit fly</name>
    <dbReference type="NCBI Taxonomy" id="7241"/>
    <lineage>
        <taxon>Eukaryota</taxon>
        <taxon>Metazoa</taxon>
        <taxon>Ecdysozoa</taxon>
        <taxon>Arthropoda</taxon>
        <taxon>Hexapoda</taxon>
        <taxon>Insecta</taxon>
        <taxon>Pterygota</taxon>
        <taxon>Neoptera</taxon>
        <taxon>Endopterygota</taxon>
        <taxon>Diptera</taxon>
        <taxon>Brachycera</taxon>
        <taxon>Muscomorpha</taxon>
        <taxon>Ephydroidea</taxon>
        <taxon>Drosophilidae</taxon>
        <taxon>Drosophila</taxon>
        <taxon>Sophophora</taxon>
    </lineage>
</organism>
<comment type="function">
    <text evidence="1">Component of the cytochrome c oxidase, the last enzyme in the mitochondrial electron transport chain which drives oxidative phosphorylation. The respiratory chain contains 3 multisubunit complexes succinate dehydrogenase (complex II, CII), ubiquinol-cytochrome c oxidoreductase (cytochrome b-c1 complex, complex III, CIII) and cytochrome c oxidase (complex IV, CIV), that cooperate to transfer electrons derived from NADH and succinate to molecular oxygen, creating an electrochemical gradient over the inner membrane that drives transmembrane transport and the ATP synthase. Cytochrome c oxidase is the component of the respiratory chain that catalyzes the reduction of oxygen to water. Electrons originating from reduced cytochrome c in the intermembrane space (IMS) are transferred via the dinuclear copper A center (CU(A)) of subunit 2 and heme A of subunit 1 to the active site in subunit 1, a binuclear center (BNC) formed by heme A3 and copper B (CU(B)). The BNC reduces molecular oxygen to 2 water molecules using 4 electrons from cytochrome c in the IMS and 4 protons from the mitochondrial matrix.</text>
</comment>
<comment type="catalytic activity">
    <reaction evidence="1">
        <text>4 Fe(II)-[cytochrome c] + O2 + 8 H(+)(in) = 4 Fe(III)-[cytochrome c] + 2 H2O + 4 H(+)(out)</text>
        <dbReference type="Rhea" id="RHEA:11436"/>
        <dbReference type="Rhea" id="RHEA-COMP:10350"/>
        <dbReference type="Rhea" id="RHEA-COMP:14399"/>
        <dbReference type="ChEBI" id="CHEBI:15377"/>
        <dbReference type="ChEBI" id="CHEBI:15378"/>
        <dbReference type="ChEBI" id="CHEBI:15379"/>
        <dbReference type="ChEBI" id="CHEBI:29033"/>
        <dbReference type="ChEBI" id="CHEBI:29034"/>
        <dbReference type="EC" id="7.1.1.9"/>
    </reaction>
    <physiologicalReaction direction="left-to-right" evidence="1">
        <dbReference type="Rhea" id="RHEA:11437"/>
    </physiologicalReaction>
</comment>
<comment type="cofactor">
    <cofactor evidence="1">
        <name>Cu cation</name>
        <dbReference type="ChEBI" id="CHEBI:23378"/>
    </cofactor>
    <text evidence="1">Binds a dinuclear copper A center per subunit.</text>
</comment>
<comment type="subunit">
    <text evidence="1">Component of the cytochrome c oxidase (complex IV, CIV), a multisubunit enzyme composed of a catalytic core of 3 subunits and several supernumerary subunits. The complex exists as a monomer or a dimer and forms supercomplexes (SCs) in the inner mitochondrial membrane with ubiquinol-cytochrome c oxidoreductase (cytochrome b-c1 complex, complex III, CIII).</text>
</comment>
<comment type="subcellular location">
    <subcellularLocation>
        <location evidence="1">Mitochondrion inner membrane</location>
        <topology evidence="1">Multi-pass membrane protein</topology>
    </subcellularLocation>
</comment>
<comment type="similarity">
    <text evidence="3">Belongs to the cytochrome c oxidase subunit 2 family.</text>
</comment>
<evidence type="ECO:0000250" key="1">
    <source>
        <dbReference type="UniProtKB" id="P00410"/>
    </source>
</evidence>
<evidence type="ECO:0000255" key="2"/>
<evidence type="ECO:0000305" key="3"/>
<protein>
    <recommendedName>
        <fullName>Cytochrome c oxidase subunit 2</fullName>
        <ecNumber>7.1.1.9</ecNumber>
    </recommendedName>
    <alternativeName>
        <fullName>Cytochrome c oxidase polypeptide II</fullName>
    </alternativeName>
</protein>
<dbReference type="EC" id="7.1.1.9"/>
<dbReference type="EMBL" id="M95151">
    <property type="protein sequence ID" value="AAA02781.2"/>
    <property type="molecule type" value="Genomic_DNA"/>
</dbReference>
<dbReference type="SMR" id="P29865"/>
<dbReference type="EnsemblMetazoa" id="GeneID_43561545_t1">
    <property type="protein sequence ID" value="YP_009725120.1"/>
    <property type="gene ID" value="GeneID_43561545"/>
</dbReference>
<dbReference type="GO" id="GO:0005743">
    <property type="term" value="C:mitochondrial inner membrane"/>
    <property type="evidence" value="ECO:0007669"/>
    <property type="project" value="UniProtKB-SubCell"/>
</dbReference>
<dbReference type="GO" id="GO:0005507">
    <property type="term" value="F:copper ion binding"/>
    <property type="evidence" value="ECO:0007669"/>
    <property type="project" value="InterPro"/>
</dbReference>
<dbReference type="GO" id="GO:0004129">
    <property type="term" value="F:cytochrome-c oxidase activity"/>
    <property type="evidence" value="ECO:0007669"/>
    <property type="project" value="UniProtKB-EC"/>
</dbReference>
<dbReference type="GO" id="GO:0042773">
    <property type="term" value="P:ATP synthesis coupled electron transport"/>
    <property type="evidence" value="ECO:0007669"/>
    <property type="project" value="TreeGrafter"/>
</dbReference>
<dbReference type="CDD" id="cd13912">
    <property type="entry name" value="CcO_II_C"/>
    <property type="match status" value="1"/>
</dbReference>
<dbReference type="FunFam" id="1.10.287.90:FF:000006">
    <property type="entry name" value="Cytochrome c oxidase subunit 2"/>
    <property type="match status" value="1"/>
</dbReference>
<dbReference type="FunFam" id="2.60.40.420:FF:000001">
    <property type="entry name" value="Cytochrome c oxidase subunit 2"/>
    <property type="match status" value="1"/>
</dbReference>
<dbReference type="Gene3D" id="1.10.287.90">
    <property type="match status" value="1"/>
</dbReference>
<dbReference type="Gene3D" id="2.60.40.420">
    <property type="entry name" value="Cupredoxins - blue copper proteins"/>
    <property type="match status" value="1"/>
</dbReference>
<dbReference type="InterPro" id="IPR045187">
    <property type="entry name" value="CcO_II"/>
</dbReference>
<dbReference type="InterPro" id="IPR002429">
    <property type="entry name" value="CcO_II-like_C"/>
</dbReference>
<dbReference type="InterPro" id="IPR034210">
    <property type="entry name" value="CcO_II_C"/>
</dbReference>
<dbReference type="InterPro" id="IPR001505">
    <property type="entry name" value="Copper_CuA"/>
</dbReference>
<dbReference type="InterPro" id="IPR008972">
    <property type="entry name" value="Cupredoxin"/>
</dbReference>
<dbReference type="InterPro" id="IPR014222">
    <property type="entry name" value="Cyt_c_oxidase_su2"/>
</dbReference>
<dbReference type="InterPro" id="IPR011759">
    <property type="entry name" value="Cyt_c_oxidase_su2_TM_dom"/>
</dbReference>
<dbReference type="InterPro" id="IPR036257">
    <property type="entry name" value="Cyt_c_oxidase_su2_TM_sf"/>
</dbReference>
<dbReference type="NCBIfam" id="TIGR02866">
    <property type="entry name" value="CoxB"/>
    <property type="match status" value="1"/>
</dbReference>
<dbReference type="PANTHER" id="PTHR22888:SF9">
    <property type="entry name" value="CYTOCHROME C OXIDASE SUBUNIT 2"/>
    <property type="match status" value="1"/>
</dbReference>
<dbReference type="PANTHER" id="PTHR22888">
    <property type="entry name" value="CYTOCHROME C OXIDASE, SUBUNIT II"/>
    <property type="match status" value="1"/>
</dbReference>
<dbReference type="Pfam" id="PF00116">
    <property type="entry name" value="COX2"/>
    <property type="match status" value="1"/>
</dbReference>
<dbReference type="Pfam" id="PF02790">
    <property type="entry name" value="COX2_TM"/>
    <property type="match status" value="1"/>
</dbReference>
<dbReference type="PRINTS" id="PR01166">
    <property type="entry name" value="CYCOXIDASEII"/>
</dbReference>
<dbReference type="SUPFAM" id="SSF49503">
    <property type="entry name" value="Cupredoxins"/>
    <property type="match status" value="1"/>
</dbReference>
<dbReference type="SUPFAM" id="SSF81464">
    <property type="entry name" value="Cytochrome c oxidase subunit II-like, transmembrane region"/>
    <property type="match status" value="1"/>
</dbReference>
<dbReference type="PROSITE" id="PS00078">
    <property type="entry name" value="COX2"/>
    <property type="match status" value="1"/>
</dbReference>
<dbReference type="PROSITE" id="PS50857">
    <property type="entry name" value="COX2_CUA"/>
    <property type="match status" value="1"/>
</dbReference>
<dbReference type="PROSITE" id="PS50999">
    <property type="entry name" value="COX2_TM"/>
    <property type="match status" value="1"/>
</dbReference>
<keyword id="KW-0186">Copper</keyword>
<keyword id="KW-0249">Electron transport</keyword>
<keyword id="KW-0460">Magnesium</keyword>
<keyword id="KW-0472">Membrane</keyword>
<keyword id="KW-0479">Metal-binding</keyword>
<keyword id="KW-0496">Mitochondrion</keyword>
<keyword id="KW-0999">Mitochondrion inner membrane</keyword>
<keyword id="KW-0679">Respiratory chain</keyword>
<keyword id="KW-1278">Translocase</keyword>
<keyword id="KW-0812">Transmembrane</keyword>
<keyword id="KW-1133">Transmembrane helix</keyword>
<keyword id="KW-0813">Transport</keyword>
<proteinExistence type="inferred from homology"/>
<accession>P29865</accession>
<feature type="chain" id="PRO_0000183586" description="Cytochrome c oxidase subunit 2">
    <location>
        <begin position="1"/>
        <end position="229"/>
    </location>
</feature>
<feature type="topological domain" description="Mitochondrial intermembrane" evidence="2">
    <location>
        <begin position="1"/>
        <end position="26"/>
    </location>
</feature>
<feature type="transmembrane region" description="Helical" evidence="2">
    <location>
        <begin position="27"/>
        <end position="48"/>
    </location>
</feature>
<feature type="topological domain" description="Mitochondrial matrix" evidence="2">
    <location>
        <begin position="49"/>
        <end position="62"/>
    </location>
</feature>
<feature type="transmembrane region" description="Helical" evidence="2">
    <location>
        <begin position="63"/>
        <end position="82"/>
    </location>
</feature>
<feature type="topological domain" description="Mitochondrial intermembrane" evidence="2">
    <location>
        <begin position="83"/>
        <end position="229"/>
    </location>
</feature>
<feature type="binding site" evidence="1">
    <location>
        <position position="161"/>
    </location>
    <ligand>
        <name>Cu cation</name>
        <dbReference type="ChEBI" id="CHEBI:23378"/>
        <label>A1</label>
    </ligand>
</feature>
<feature type="binding site" evidence="1">
    <location>
        <position position="196"/>
    </location>
    <ligand>
        <name>Cu cation</name>
        <dbReference type="ChEBI" id="CHEBI:23378"/>
        <label>A1</label>
    </ligand>
</feature>
<feature type="binding site" evidence="1">
    <location>
        <position position="196"/>
    </location>
    <ligand>
        <name>Cu cation</name>
        <dbReference type="ChEBI" id="CHEBI:23378"/>
        <label>A2</label>
    </ligand>
</feature>
<feature type="binding site" evidence="1">
    <location>
        <position position="198"/>
    </location>
    <ligand>
        <name>Cu cation</name>
        <dbReference type="ChEBI" id="CHEBI:23378"/>
        <label>A2</label>
    </ligand>
</feature>
<feature type="binding site" evidence="1">
    <location>
        <position position="198"/>
    </location>
    <ligand>
        <name>Mg(2+)</name>
        <dbReference type="ChEBI" id="CHEBI:18420"/>
        <note>ligand shared with subunit 1</note>
    </ligand>
</feature>
<feature type="binding site" evidence="1">
    <location>
        <position position="200"/>
    </location>
    <ligand>
        <name>Cu cation</name>
        <dbReference type="ChEBI" id="CHEBI:23378"/>
        <label>A1</label>
    </ligand>
</feature>
<feature type="binding site" evidence="1">
    <location>
        <position position="200"/>
    </location>
    <ligand>
        <name>Cu cation</name>
        <dbReference type="ChEBI" id="CHEBI:23378"/>
        <label>A2</label>
    </ligand>
</feature>
<feature type="binding site" evidence="1">
    <location>
        <position position="204"/>
    </location>
    <ligand>
        <name>Cu cation</name>
        <dbReference type="ChEBI" id="CHEBI:23378"/>
        <label>A2</label>
    </ligand>
</feature>
<feature type="binding site" evidence="1">
    <location>
        <position position="207"/>
    </location>
    <ligand>
        <name>Cu cation</name>
        <dbReference type="ChEBI" id="CHEBI:23378"/>
        <label>A1</label>
    </ligand>
</feature>
<gene>
    <name type="primary">mt:CoII</name>
    <name type="synonym">CoII</name>
</gene>
<reference key="1">
    <citation type="journal article" date="1993" name="Mol. Biol. Evol.">
        <title>Relationships in the Drosophila obscura species group, inferred from mitochondrial cytochrome oxidase II sequences.</title>
        <authorList>
            <person name="Beckenbach A.T."/>
            <person name="Wei Y.W."/>
            <person name="Liu H."/>
        </authorList>
    </citation>
    <scope>NUCLEOTIDE SEQUENCE [GENOMIC DNA]</scope>
</reference>